<protein>
    <recommendedName>
        <fullName>Protein translocase subunit SecF</fullName>
    </recommendedName>
</protein>
<name>SECF_DICTD</name>
<reference key="1">
    <citation type="journal article" date="2016" name="Front. Microbiol.">
        <title>The complete genome sequence of hyperthermophile Dictyoglomus turgidum DSM 6724 reveals a specialized carbohydrate fermentor.</title>
        <authorList>
            <person name="Brumm P.J."/>
            <person name="Gowda K."/>
            <person name="Robb F.T."/>
            <person name="Mead D.A."/>
        </authorList>
    </citation>
    <scope>NUCLEOTIDE SEQUENCE [LARGE SCALE GENOMIC DNA]</scope>
    <source>
        <strain>DSM 6724 / Z-1310</strain>
    </source>
</reference>
<feature type="chain" id="PRO_0000412694" description="Protein translocase subunit SecF">
    <location>
        <begin position="1"/>
        <end position="290"/>
    </location>
</feature>
<feature type="transmembrane region" description="Helical" evidence="1">
    <location>
        <begin position="15"/>
        <end position="35"/>
    </location>
</feature>
<feature type="transmembrane region" description="Helical" evidence="1">
    <location>
        <begin position="131"/>
        <end position="151"/>
    </location>
</feature>
<feature type="transmembrane region" description="Helical" evidence="1">
    <location>
        <begin position="156"/>
        <end position="176"/>
    </location>
</feature>
<feature type="transmembrane region" description="Helical" evidence="1">
    <location>
        <begin position="184"/>
        <end position="204"/>
    </location>
</feature>
<feature type="transmembrane region" description="Helical" evidence="1">
    <location>
        <begin position="234"/>
        <end position="256"/>
    </location>
</feature>
<feature type="transmembrane region" description="Helical" evidence="1">
    <location>
        <begin position="260"/>
        <end position="282"/>
    </location>
</feature>
<dbReference type="EMBL" id="CP001251">
    <property type="protein sequence ID" value="ACK42876.1"/>
    <property type="molecule type" value="Genomic_DNA"/>
</dbReference>
<dbReference type="RefSeq" id="WP_012583951.1">
    <property type="nucleotide sequence ID" value="NC_011661.1"/>
</dbReference>
<dbReference type="RefSeq" id="YP_002353490.1">
    <property type="nucleotide sequence ID" value="NC_011661.1"/>
</dbReference>
<dbReference type="SMR" id="B8E2N2"/>
<dbReference type="STRING" id="515635.Dtur_1603"/>
<dbReference type="EnsemblBacteria" id="ACK42876">
    <property type="protein sequence ID" value="ACK42876"/>
    <property type="gene ID" value="Dtur_1603"/>
</dbReference>
<dbReference type="KEGG" id="dtu:Dtur_1603"/>
<dbReference type="PATRIC" id="fig|515635.4.peg.1652"/>
<dbReference type="eggNOG" id="COG0341">
    <property type="taxonomic scope" value="Bacteria"/>
</dbReference>
<dbReference type="HOGENOM" id="CLU_050012_0_1_0"/>
<dbReference type="InParanoid" id="B8E2N2"/>
<dbReference type="OrthoDB" id="9774769at2"/>
<dbReference type="Proteomes" id="UP000007719">
    <property type="component" value="Chromosome"/>
</dbReference>
<dbReference type="GO" id="GO:0005886">
    <property type="term" value="C:plasma membrane"/>
    <property type="evidence" value="ECO:0000318"/>
    <property type="project" value="GO_Central"/>
</dbReference>
<dbReference type="GO" id="GO:0015450">
    <property type="term" value="F:protein-transporting ATPase activity"/>
    <property type="evidence" value="ECO:0007669"/>
    <property type="project" value="InterPro"/>
</dbReference>
<dbReference type="GO" id="GO:0065002">
    <property type="term" value="P:intracellular protein transmembrane transport"/>
    <property type="evidence" value="ECO:0007669"/>
    <property type="project" value="UniProtKB-UniRule"/>
</dbReference>
<dbReference type="GO" id="GO:0006605">
    <property type="term" value="P:protein targeting"/>
    <property type="evidence" value="ECO:0007669"/>
    <property type="project" value="UniProtKB-UniRule"/>
</dbReference>
<dbReference type="GO" id="GO:0015031">
    <property type="term" value="P:protein transport"/>
    <property type="evidence" value="ECO:0000318"/>
    <property type="project" value="GO_Central"/>
</dbReference>
<dbReference type="GO" id="GO:0043952">
    <property type="term" value="P:protein transport by the Sec complex"/>
    <property type="evidence" value="ECO:0007669"/>
    <property type="project" value="UniProtKB-UniRule"/>
</dbReference>
<dbReference type="FunFam" id="1.20.1640.10:FF:000100">
    <property type="match status" value="1"/>
</dbReference>
<dbReference type="Gene3D" id="1.20.1640.10">
    <property type="entry name" value="Multidrug efflux transporter AcrB transmembrane domain"/>
    <property type="match status" value="1"/>
</dbReference>
<dbReference type="HAMAP" id="MF_01464_B">
    <property type="entry name" value="SecF_B"/>
    <property type="match status" value="1"/>
</dbReference>
<dbReference type="InterPro" id="IPR022813">
    <property type="entry name" value="SecD/SecF_arch_bac"/>
</dbReference>
<dbReference type="InterPro" id="IPR022645">
    <property type="entry name" value="SecD/SecF_bac"/>
</dbReference>
<dbReference type="InterPro" id="IPR022646">
    <property type="entry name" value="SecD/SecF_CS"/>
</dbReference>
<dbReference type="InterPro" id="IPR048634">
    <property type="entry name" value="SecD_SecF_C"/>
</dbReference>
<dbReference type="InterPro" id="IPR055344">
    <property type="entry name" value="SecD_SecF_C_bact"/>
</dbReference>
<dbReference type="InterPro" id="IPR005665">
    <property type="entry name" value="SecF_bac"/>
</dbReference>
<dbReference type="NCBIfam" id="TIGR00916">
    <property type="entry name" value="2A0604s01"/>
    <property type="match status" value="1"/>
</dbReference>
<dbReference type="NCBIfam" id="TIGR00966">
    <property type="entry name" value="transloc_SecF"/>
    <property type="match status" value="1"/>
</dbReference>
<dbReference type="PANTHER" id="PTHR30081:SF8">
    <property type="entry name" value="PROTEIN TRANSLOCASE SUBUNIT SECF"/>
    <property type="match status" value="1"/>
</dbReference>
<dbReference type="PANTHER" id="PTHR30081">
    <property type="entry name" value="PROTEIN-EXPORT MEMBRANE PROTEIN SEC"/>
    <property type="match status" value="1"/>
</dbReference>
<dbReference type="Pfam" id="PF07549">
    <property type="entry name" value="Sec_GG"/>
    <property type="match status" value="1"/>
</dbReference>
<dbReference type="Pfam" id="PF02355">
    <property type="entry name" value="SecD_SecF_C"/>
    <property type="match status" value="1"/>
</dbReference>
<dbReference type="PRINTS" id="PR01755">
    <property type="entry name" value="SECFTRNLCASE"/>
</dbReference>
<dbReference type="SUPFAM" id="SSF82866">
    <property type="entry name" value="Multidrug efflux transporter AcrB transmembrane domain"/>
    <property type="match status" value="1"/>
</dbReference>
<proteinExistence type="inferred from homology"/>
<keyword id="KW-0997">Cell inner membrane</keyword>
<keyword id="KW-1003">Cell membrane</keyword>
<keyword id="KW-0472">Membrane</keyword>
<keyword id="KW-0653">Protein transport</keyword>
<keyword id="KW-1185">Reference proteome</keyword>
<keyword id="KW-0811">Translocation</keyword>
<keyword id="KW-0812">Transmembrane</keyword>
<keyword id="KW-1133">Transmembrane helix</keyword>
<keyword id="KW-0813">Transport</keyword>
<organism>
    <name type="scientific">Dictyoglomus turgidum (strain DSM 6724 / Z-1310)</name>
    <dbReference type="NCBI Taxonomy" id="515635"/>
    <lineage>
        <taxon>Bacteria</taxon>
        <taxon>Pseudomonadati</taxon>
        <taxon>Dictyoglomota</taxon>
        <taxon>Dictyoglomia</taxon>
        <taxon>Dictyoglomales</taxon>
        <taxon>Dictyoglomaceae</taxon>
        <taxon>Dictyoglomus</taxon>
    </lineage>
</organism>
<gene>
    <name evidence="1" type="primary">secF</name>
    <name type="ordered locus">Dtur_1603</name>
</gene>
<accession>B8E2N2</accession>
<sequence>MKKEINFLGKRVRRVFMILSLLFVIIGMYFFFTKGLNYSIDFQSGSVIYYKLSSPLNSNQIANLRDIARSFYSKSTIQTGSNGKEVWIRTKFLEENELKRLTSEVEKVIVKYEGREITTIEPTISRELREKAILAAVLAIIVMLVYITVRFRFDFAISAIINEAFVLLATISIFAISQWEVSPSFIAAILTLLGYAINDNIIVFDRIRENSKKYPKEDFTIIANRSINQTLARTLYTVITTLLAITPLLIWGGVVLRPFILAIYLGIIIGTYSTIYIASAILCEWRELQK</sequence>
<comment type="function">
    <text evidence="1">Part of the Sec protein translocase complex. Interacts with the SecYEG preprotein conducting channel. SecDF uses the proton motive force (PMF) to complete protein translocation after the ATP-dependent function of SecA.</text>
</comment>
<comment type="subunit">
    <text evidence="1">Forms a complex with SecD. Part of the essential Sec protein translocation apparatus which comprises SecA, SecYEG and auxiliary proteins SecDF. Other proteins may also be involved.</text>
</comment>
<comment type="subcellular location">
    <subcellularLocation>
        <location evidence="1">Cell inner membrane</location>
        <topology evidence="1">Multi-pass membrane protein</topology>
    </subcellularLocation>
</comment>
<comment type="similarity">
    <text evidence="1">Belongs to the SecD/SecF family. SecF subfamily.</text>
</comment>
<evidence type="ECO:0000255" key="1">
    <source>
        <dbReference type="HAMAP-Rule" id="MF_01464"/>
    </source>
</evidence>